<proteinExistence type="inferred from homology"/>
<protein>
    <recommendedName>
        <fullName evidence="1">Galactose-6-phosphate isomerase subunit LacA 2</fullName>
        <ecNumber evidence="1">5.3.1.26</ecNumber>
    </recommendedName>
</protein>
<dbReference type="EC" id="5.3.1.26" evidence="1"/>
<dbReference type="EMBL" id="AE009949">
    <property type="protein sequence ID" value="AAL98476.1"/>
    <property type="molecule type" value="Genomic_DNA"/>
</dbReference>
<dbReference type="SMR" id="Q7CMS1"/>
<dbReference type="KEGG" id="spm:spyM18_1991"/>
<dbReference type="HOGENOM" id="CLU_091396_4_2_9"/>
<dbReference type="UniPathway" id="UPA00702">
    <property type="reaction ID" value="UER00714"/>
</dbReference>
<dbReference type="GO" id="GO:0050044">
    <property type="term" value="F:galactose-6-phosphate isomerase activity"/>
    <property type="evidence" value="ECO:0007669"/>
    <property type="project" value="UniProtKB-UniRule"/>
</dbReference>
<dbReference type="GO" id="GO:0004751">
    <property type="term" value="F:ribose-5-phosphate isomerase activity"/>
    <property type="evidence" value="ECO:0007669"/>
    <property type="project" value="TreeGrafter"/>
</dbReference>
<dbReference type="GO" id="GO:0019316">
    <property type="term" value="P:D-allose catabolic process"/>
    <property type="evidence" value="ECO:0007669"/>
    <property type="project" value="TreeGrafter"/>
</dbReference>
<dbReference type="GO" id="GO:0019388">
    <property type="term" value="P:galactose catabolic process"/>
    <property type="evidence" value="ECO:0007669"/>
    <property type="project" value="UniProtKB-UniPathway"/>
</dbReference>
<dbReference type="GO" id="GO:0019512">
    <property type="term" value="P:lactose catabolic process via tagatose-6-phosphate"/>
    <property type="evidence" value="ECO:0007669"/>
    <property type="project" value="UniProtKB-UniRule"/>
</dbReference>
<dbReference type="GO" id="GO:0009052">
    <property type="term" value="P:pentose-phosphate shunt, non-oxidative branch"/>
    <property type="evidence" value="ECO:0007669"/>
    <property type="project" value="TreeGrafter"/>
</dbReference>
<dbReference type="Gene3D" id="3.40.1400.10">
    <property type="entry name" value="Sugar-phosphate isomerase, RpiB/LacA/LacB"/>
    <property type="match status" value="1"/>
</dbReference>
<dbReference type="HAMAP" id="MF_01555">
    <property type="entry name" value="LacA"/>
    <property type="match status" value="1"/>
</dbReference>
<dbReference type="InterPro" id="IPR004783">
    <property type="entry name" value="LacA"/>
</dbReference>
<dbReference type="InterPro" id="IPR003500">
    <property type="entry name" value="RpiB_LacA_LacB"/>
</dbReference>
<dbReference type="InterPro" id="IPR036569">
    <property type="entry name" value="RpiB_LacA_LacB_sf"/>
</dbReference>
<dbReference type="NCBIfam" id="TIGR01118">
    <property type="entry name" value="lacA"/>
    <property type="match status" value="1"/>
</dbReference>
<dbReference type="NCBIfam" id="NF006380">
    <property type="entry name" value="PRK08621.1"/>
    <property type="match status" value="1"/>
</dbReference>
<dbReference type="NCBIfam" id="TIGR00689">
    <property type="entry name" value="rpiB_lacA_lacB"/>
    <property type="match status" value="1"/>
</dbReference>
<dbReference type="PANTHER" id="PTHR30345:SF5">
    <property type="entry name" value="GALACTOSE-6-PHOSPHATE ISOMERASE SUBUNIT LACA"/>
    <property type="match status" value="1"/>
</dbReference>
<dbReference type="PANTHER" id="PTHR30345">
    <property type="entry name" value="RIBOSE-5-PHOSPHATE ISOMERASE B"/>
    <property type="match status" value="1"/>
</dbReference>
<dbReference type="Pfam" id="PF02502">
    <property type="entry name" value="LacAB_rpiB"/>
    <property type="match status" value="1"/>
</dbReference>
<dbReference type="PIRSF" id="PIRSF005384">
    <property type="entry name" value="RpiB_LacA_B"/>
    <property type="match status" value="1"/>
</dbReference>
<dbReference type="SUPFAM" id="SSF89623">
    <property type="entry name" value="Ribose/Galactose isomerase RpiB/AlsB"/>
    <property type="match status" value="1"/>
</dbReference>
<name>LACA2_STRP8</name>
<evidence type="ECO:0000255" key="1">
    <source>
        <dbReference type="HAMAP-Rule" id="MF_01555"/>
    </source>
</evidence>
<sequence length="142" mass="15413">MAIIIGADKAGQELKEVIKDYLKEGKYEVVDVSENEVRDFVDTTLAVAKEVNASEDNLGIVIDAYGVGSFMVATKIKGMVAAEVSDERSAYMTRGHNNARIITLGSEISAPGIAKNIIKGFVEGKYDGGRHQVRVDMLNKMC</sequence>
<gene>
    <name evidence="1" type="primary">lacA2</name>
    <name type="ordered locus">spyM18_1991</name>
</gene>
<organism>
    <name type="scientific">Streptococcus pyogenes serotype M18 (strain MGAS8232)</name>
    <dbReference type="NCBI Taxonomy" id="186103"/>
    <lineage>
        <taxon>Bacteria</taxon>
        <taxon>Bacillati</taxon>
        <taxon>Bacillota</taxon>
        <taxon>Bacilli</taxon>
        <taxon>Lactobacillales</taxon>
        <taxon>Streptococcaceae</taxon>
        <taxon>Streptococcus</taxon>
    </lineage>
</organism>
<keyword id="KW-0413">Isomerase</keyword>
<keyword id="KW-0423">Lactose metabolism</keyword>
<comment type="catalytic activity">
    <reaction evidence="1">
        <text>aldehydo-D-galactose 6-phosphate = keto-D-tagatose 6-phosphate</text>
        <dbReference type="Rhea" id="RHEA:13033"/>
        <dbReference type="ChEBI" id="CHEBI:58255"/>
        <dbReference type="ChEBI" id="CHEBI:134283"/>
        <dbReference type="EC" id="5.3.1.26"/>
    </reaction>
</comment>
<comment type="pathway">
    <text evidence="1">Carbohydrate metabolism; D-galactose 6-phosphate degradation; D-tagatose 6-phosphate from D-galactose 6-phosphate: step 1/1.</text>
</comment>
<comment type="subunit">
    <text evidence="1">Heteromultimeric protein consisting of LacA and LacB.</text>
</comment>
<comment type="similarity">
    <text evidence="1">Belongs to the LacAB/RpiB family.</text>
</comment>
<reference key="1">
    <citation type="journal article" date="2002" name="Proc. Natl. Acad. Sci. U.S.A.">
        <title>Genome sequence and comparative microarray analysis of serotype M18 group A Streptococcus strains associated with acute rheumatic fever outbreaks.</title>
        <authorList>
            <person name="Smoot J.C."/>
            <person name="Barbian K.D."/>
            <person name="Van Gompel J.J."/>
            <person name="Smoot L.M."/>
            <person name="Chaussee M.S."/>
            <person name="Sylva G.L."/>
            <person name="Sturdevant D.E."/>
            <person name="Ricklefs S.M."/>
            <person name="Porcella S.F."/>
            <person name="Parkins L.D."/>
            <person name="Beres S.B."/>
            <person name="Campbell D.S."/>
            <person name="Smith T.M."/>
            <person name="Zhang Q."/>
            <person name="Kapur V."/>
            <person name="Daly J.A."/>
            <person name="Veasy L.G."/>
            <person name="Musser J.M."/>
        </authorList>
    </citation>
    <scope>NUCLEOTIDE SEQUENCE [LARGE SCALE GENOMIC DNA]</scope>
    <source>
        <strain>MGAS8232</strain>
    </source>
</reference>
<feature type="chain" id="PRO_0000208125" description="Galactose-6-phosphate isomerase subunit LacA 2">
    <location>
        <begin position="1"/>
        <end position="142"/>
    </location>
</feature>
<accession>Q7CMS1</accession>